<sequence>MVHATACSEIIRAEVAELLGVRADALHPGANLVGQGLDSIRMMSLVGRWRRKGIAVDFATLAATPTIEAWSQLVSAGTGVAPTAVAAPGDAGLSQEGEPFPLAPMQHAMWVGRHDHQQLGGVAGHLYVEFDGARVDPDRLRAAATRLALRHPMLRVQFLPDGTQRIPPAAGSRDFPISVADLRHVAPDVVDQRLAGIRDAKSHQQLDGAVFELALTLLPGERTRLHVDLDMQAADAMSYRILLADLAALYDGREPPALGYTYREYRQAIEAEETLPQPVRDADRDWWAQRIPQLPDPPALPTRAGGERDRRRSTRRWHWLDPQTRDALFARARARGITPAMTLAAAFANVLARWSASSRFLLNLPLFSRQALHPDVDLLVGDFTSSLLLDVDLTGARTAAARAQAVQEALRSAAGHSAYPGLSVLRDLSRHRGTQVLAPVVFTSALGLGDLFCPDVTEQFGTPGWIISQGPQVLLDAQVTEFDGGVLVNWDVREGVFAPGVIDAMFTHQVDELLRLAAGDDAWDAPSPSALPAAQRAVRAALNGRTAAPSTEALHDGFFRQAQQQPDAPAVFASSGDLSYAQLRDQASAVAAALRAAGLRVGDTVAVLGPKTGEQVAAVLGILAAGGVYLPIGVDQPRDRAERILATGSVNLALVCGPPCQVRVPVPTLLLADVLAAAPAEFVPGPSDPTALAYVLFTSGSTGEPKGVEVAHDAAMNTVETFIRHFELGAADRWLALATLECDMSVLDIFAALRSGGAIVVVDEAQRRDPDAWARLIDTYEVTALNFMPGWLDMLLEVGGGRLSSLRAVAVGGDWVRPDLARRLQVQAPSARFAGLGGATETAVHATIFEVQDAANLPPDWASVPYGVPFPNNACRVVADSGDDCPDWVAGELWVSGRGIARGYRGRPELTAERFVEHDGRTWYRTGDLARYWHDGTLEFVGRADHRVKISGYRVELGEIEAALQRLPGVHAAAATVLPGGSDVLAAAVCVDDAGVTAESIRQQLADLVPAHMIPRHVTLLDRIPFTDSGKIDRAEVGALLAAEVERSGDRSAPYAAPRTVLQRALRRIVADILGRANDAVGVHDDFFALGGDSVLATQVVAGIRRWLDSPSLMVADMFAARTIAALAQLLTGREANADRLELVAEVYLEIANMTSADVMAALDPIEQPAQPAFKPWVKRFTGTDKPGAVLVFPHAGGAAAAYRWLAKSLVANDVDTFVVQYPQRADRRSHPAADSIEALALELFEAGDWHLTAPLTLFGHCMGAIVAFEFARLAERNGVPVRALWASSGQAPSTVAASGPLPTADRDVLADMVDLGGTDPVLLEDEEFVELLVPAVKADYRALSGYSCPPDVRIRANIHAVGGNRDHRISREMLTSWETHTSGRFTLSHFDGGHFYLNDHLDAVARMVSADVR</sequence>
<proteinExistence type="evidence at protein level"/>
<protein>
    <recommendedName>
        <fullName>Phenyloxazoline synthase MbtB</fullName>
        <ecNumber>6.3.2.-</ecNumber>
    </recommendedName>
    <alternativeName>
        <fullName>Mycobactin synthetase protein B</fullName>
    </alternativeName>
</protein>
<dbReference type="EC" id="6.3.2.-"/>
<dbReference type="EMBL" id="AL123456">
    <property type="protein sequence ID" value="CCP45171.1"/>
    <property type="molecule type" value="Genomic_DNA"/>
</dbReference>
<dbReference type="PIR" id="B70674">
    <property type="entry name" value="B70674"/>
</dbReference>
<dbReference type="RefSeq" id="NP_216899.1">
    <property type="nucleotide sequence ID" value="NC_000962.3"/>
</dbReference>
<dbReference type="RefSeq" id="WP_003899299.1">
    <property type="nucleotide sequence ID" value="NZ_NVQJ01000029.1"/>
</dbReference>
<dbReference type="SMR" id="P9WQ63"/>
<dbReference type="FunCoup" id="P9WQ63">
    <property type="interactions" value="8"/>
</dbReference>
<dbReference type="STRING" id="83332.Rv2383c"/>
<dbReference type="ESTHER" id="myctu-MBTB">
    <property type="family name" value="Thioesterase"/>
</dbReference>
<dbReference type="PaxDb" id="83332-Rv2383c"/>
<dbReference type="DNASU" id="885838"/>
<dbReference type="GeneID" id="885838"/>
<dbReference type="KEGG" id="mtu:Rv2383c"/>
<dbReference type="KEGG" id="mtv:RVBD_2383c"/>
<dbReference type="PATRIC" id="fig|83332.111.peg.2657"/>
<dbReference type="TubercuList" id="Rv2383c"/>
<dbReference type="eggNOG" id="COG1020">
    <property type="taxonomic scope" value="Bacteria"/>
</dbReference>
<dbReference type="eggNOG" id="COG3208">
    <property type="taxonomic scope" value="Bacteria"/>
</dbReference>
<dbReference type="InParanoid" id="P9WQ63"/>
<dbReference type="OrthoDB" id="2472181at2"/>
<dbReference type="PhylomeDB" id="P9WQ63"/>
<dbReference type="BioCyc" id="MetaCyc:G185E-6609-MONOMER"/>
<dbReference type="UniPathway" id="UPA00011"/>
<dbReference type="Proteomes" id="UP000001584">
    <property type="component" value="Chromosome"/>
</dbReference>
<dbReference type="GO" id="GO:0005737">
    <property type="term" value="C:cytoplasm"/>
    <property type="evidence" value="ECO:0000318"/>
    <property type="project" value="GO_Central"/>
</dbReference>
<dbReference type="GO" id="GO:0009274">
    <property type="term" value="C:peptidoglycan-based cell wall"/>
    <property type="evidence" value="ECO:0007005"/>
    <property type="project" value="MTBBASE"/>
</dbReference>
<dbReference type="GO" id="GO:0005886">
    <property type="term" value="C:plasma membrane"/>
    <property type="evidence" value="ECO:0007005"/>
    <property type="project" value="MTBBASE"/>
</dbReference>
<dbReference type="GO" id="GO:0000036">
    <property type="term" value="F:acyl carrier activity"/>
    <property type="evidence" value="ECO:0000314"/>
    <property type="project" value="MTBBASE"/>
</dbReference>
<dbReference type="GO" id="GO:0016874">
    <property type="term" value="F:ligase activity"/>
    <property type="evidence" value="ECO:0007669"/>
    <property type="project" value="UniProtKB-KW"/>
</dbReference>
<dbReference type="GO" id="GO:0031177">
    <property type="term" value="F:phosphopantetheine binding"/>
    <property type="evidence" value="ECO:0000314"/>
    <property type="project" value="MTBBASE"/>
</dbReference>
<dbReference type="GO" id="GO:0043041">
    <property type="term" value="P:amino acid activation for nonribosomal peptide biosynthetic process"/>
    <property type="evidence" value="ECO:0000318"/>
    <property type="project" value="GO_Central"/>
</dbReference>
<dbReference type="GO" id="GO:0019540">
    <property type="term" value="P:catechol-containing siderophore biosynthetic process"/>
    <property type="evidence" value="ECO:0000315"/>
    <property type="project" value="MTBBASE"/>
</dbReference>
<dbReference type="GO" id="GO:0010106">
    <property type="term" value="P:cellular response to iron ion starvation"/>
    <property type="evidence" value="ECO:0000270"/>
    <property type="project" value="MTBBASE"/>
</dbReference>
<dbReference type="GO" id="GO:0044847">
    <property type="term" value="P:iron acquisition from host"/>
    <property type="evidence" value="ECO:0000270"/>
    <property type="project" value="MTBBASE"/>
</dbReference>
<dbReference type="GO" id="GO:0044550">
    <property type="term" value="P:secondary metabolite biosynthetic process"/>
    <property type="evidence" value="ECO:0000318"/>
    <property type="project" value="GO_Central"/>
</dbReference>
<dbReference type="GO" id="GO:0019290">
    <property type="term" value="P:siderophore biosynthetic process"/>
    <property type="evidence" value="ECO:0000315"/>
    <property type="project" value="UniProtKB"/>
</dbReference>
<dbReference type="CDD" id="cd12114">
    <property type="entry name" value="A_NRPS_TlmIV_like"/>
    <property type="match status" value="1"/>
</dbReference>
<dbReference type="CDD" id="cd19535">
    <property type="entry name" value="Cyc_NRPS"/>
    <property type="match status" value="1"/>
</dbReference>
<dbReference type="FunFam" id="1.10.1200.10:FF:000016">
    <property type="entry name" value="Non-ribosomal peptide synthase"/>
    <property type="match status" value="1"/>
</dbReference>
<dbReference type="FunFam" id="3.30.559.10:FF:000023">
    <property type="entry name" value="Non-ribosomal peptide synthetase"/>
    <property type="match status" value="1"/>
</dbReference>
<dbReference type="FunFam" id="3.40.50.12780:FF:000012">
    <property type="entry name" value="Non-ribosomal peptide synthetase"/>
    <property type="match status" value="1"/>
</dbReference>
<dbReference type="FunFam" id="3.40.50.1820:FF:000366">
    <property type="entry name" value="Phenyloxazoline synthase MbtB"/>
    <property type="match status" value="1"/>
</dbReference>
<dbReference type="FunFam" id="3.30.559.30:FF:000006">
    <property type="entry name" value="Yersiniabactin polyketide/non-ribosomal peptide synthetase"/>
    <property type="match status" value="1"/>
</dbReference>
<dbReference type="Gene3D" id="3.30.300.30">
    <property type="match status" value="1"/>
</dbReference>
<dbReference type="Gene3D" id="1.10.1200.10">
    <property type="entry name" value="ACP-like"/>
    <property type="match status" value="2"/>
</dbReference>
<dbReference type="Gene3D" id="3.40.50.1820">
    <property type="entry name" value="alpha/beta hydrolase"/>
    <property type="match status" value="1"/>
</dbReference>
<dbReference type="Gene3D" id="3.30.559.10">
    <property type="entry name" value="Chloramphenicol acetyltransferase-like domain"/>
    <property type="match status" value="1"/>
</dbReference>
<dbReference type="Gene3D" id="3.40.50.12780">
    <property type="entry name" value="N-terminal domain of ligase-like"/>
    <property type="match status" value="1"/>
</dbReference>
<dbReference type="Gene3D" id="3.30.559.30">
    <property type="entry name" value="Nonribosomal peptide synthetase, condensation domain"/>
    <property type="match status" value="1"/>
</dbReference>
<dbReference type="InterPro" id="IPR010071">
    <property type="entry name" value="AA_adenyl_dom"/>
</dbReference>
<dbReference type="InterPro" id="IPR029058">
    <property type="entry name" value="AB_hydrolase_fold"/>
</dbReference>
<dbReference type="InterPro" id="IPR036736">
    <property type="entry name" value="ACP-like_sf"/>
</dbReference>
<dbReference type="InterPro" id="IPR025110">
    <property type="entry name" value="AMP-bd_C"/>
</dbReference>
<dbReference type="InterPro" id="IPR045851">
    <property type="entry name" value="AMP-bd_C_sf"/>
</dbReference>
<dbReference type="InterPro" id="IPR020845">
    <property type="entry name" value="AMP-binding_CS"/>
</dbReference>
<dbReference type="InterPro" id="IPR000873">
    <property type="entry name" value="AMP-dep_synth/lig_dom"/>
</dbReference>
<dbReference type="InterPro" id="IPR042099">
    <property type="entry name" value="ANL_N_sf"/>
</dbReference>
<dbReference type="InterPro" id="IPR023213">
    <property type="entry name" value="CAT-like_dom_sf"/>
</dbReference>
<dbReference type="InterPro" id="IPR001242">
    <property type="entry name" value="Condensatn"/>
</dbReference>
<dbReference type="InterPro" id="IPR020806">
    <property type="entry name" value="PKS_PP-bd"/>
</dbReference>
<dbReference type="InterPro" id="IPR009081">
    <property type="entry name" value="PP-bd_ACP"/>
</dbReference>
<dbReference type="InterPro" id="IPR006162">
    <property type="entry name" value="Ppantetheine_attach_site"/>
</dbReference>
<dbReference type="InterPro" id="IPR001031">
    <property type="entry name" value="Thioesterase"/>
</dbReference>
<dbReference type="NCBIfam" id="TIGR01733">
    <property type="entry name" value="AA-adenyl-dom"/>
    <property type="match status" value="1"/>
</dbReference>
<dbReference type="PANTHER" id="PTHR45527">
    <property type="entry name" value="NONRIBOSOMAL PEPTIDE SYNTHETASE"/>
    <property type="match status" value="1"/>
</dbReference>
<dbReference type="PANTHER" id="PTHR45527:SF10">
    <property type="entry name" value="PYOCHELIN SYNTHASE PCHF"/>
    <property type="match status" value="1"/>
</dbReference>
<dbReference type="Pfam" id="PF00501">
    <property type="entry name" value="AMP-binding"/>
    <property type="match status" value="1"/>
</dbReference>
<dbReference type="Pfam" id="PF13193">
    <property type="entry name" value="AMP-binding_C"/>
    <property type="match status" value="1"/>
</dbReference>
<dbReference type="Pfam" id="PF00668">
    <property type="entry name" value="Condensation"/>
    <property type="match status" value="1"/>
</dbReference>
<dbReference type="Pfam" id="PF00550">
    <property type="entry name" value="PP-binding"/>
    <property type="match status" value="2"/>
</dbReference>
<dbReference type="Pfam" id="PF00975">
    <property type="entry name" value="Thioesterase"/>
    <property type="match status" value="1"/>
</dbReference>
<dbReference type="SMART" id="SM00823">
    <property type="entry name" value="PKS_PP"/>
    <property type="match status" value="2"/>
</dbReference>
<dbReference type="SUPFAM" id="SSF56801">
    <property type="entry name" value="Acetyl-CoA synthetase-like"/>
    <property type="match status" value="1"/>
</dbReference>
<dbReference type="SUPFAM" id="SSF47336">
    <property type="entry name" value="ACP-like"/>
    <property type="match status" value="2"/>
</dbReference>
<dbReference type="SUPFAM" id="SSF53474">
    <property type="entry name" value="alpha/beta-Hydrolases"/>
    <property type="match status" value="1"/>
</dbReference>
<dbReference type="SUPFAM" id="SSF52777">
    <property type="entry name" value="CoA-dependent acyltransferases"/>
    <property type="match status" value="2"/>
</dbReference>
<dbReference type="PROSITE" id="PS00455">
    <property type="entry name" value="AMP_BINDING"/>
    <property type="match status" value="1"/>
</dbReference>
<dbReference type="PROSITE" id="PS50075">
    <property type="entry name" value="CARRIER"/>
    <property type="match status" value="2"/>
</dbReference>
<dbReference type="PROSITE" id="PS00012">
    <property type="entry name" value="PHOSPHOPANTETHEINE"/>
    <property type="match status" value="1"/>
</dbReference>
<feature type="chain" id="PRO_0000261306" description="Phenyloxazoline synthase MbtB">
    <location>
        <begin position="1"/>
        <end position="1414"/>
    </location>
</feature>
<feature type="domain" description="Carrier 1" evidence="2">
    <location>
        <begin position="5"/>
        <end position="78"/>
    </location>
</feature>
<feature type="domain" description="Carrier 2" evidence="2">
    <location>
        <begin position="1057"/>
        <end position="1135"/>
    </location>
</feature>
<feature type="region of interest" description="Condensation/cyclization" evidence="1">
    <location>
        <begin position="96"/>
        <end position="394"/>
    </location>
</feature>
<feature type="region of interest" description="Adenylation" evidence="1">
    <location>
        <begin position="579"/>
        <end position="975"/>
    </location>
</feature>
<feature type="region of interest" description="Thioesterase" evidence="1">
    <location>
        <begin position="1188"/>
        <end position="1413"/>
    </location>
</feature>
<feature type="modified residue" description="O-(pantetheine 4'-phosphoryl)serine" evidence="2">
    <location>
        <position position="39"/>
    </location>
</feature>
<feature type="modified residue" description="O-(pantetheine 4'-phosphoryl)serine" evidence="2">
    <location>
        <position position="1094"/>
    </location>
</feature>
<keyword id="KW-0436">Ligase</keyword>
<keyword id="KW-0511">Multifunctional enzyme</keyword>
<keyword id="KW-0596">Phosphopantetheine</keyword>
<keyword id="KW-0597">Phosphoprotein</keyword>
<keyword id="KW-1185">Reference proteome</keyword>
<keyword id="KW-0677">Repeat</keyword>
<reference key="1">
    <citation type="journal article" date="1998" name="Nature">
        <title>Deciphering the biology of Mycobacterium tuberculosis from the complete genome sequence.</title>
        <authorList>
            <person name="Cole S.T."/>
            <person name="Brosch R."/>
            <person name="Parkhill J."/>
            <person name="Garnier T."/>
            <person name="Churcher C.M."/>
            <person name="Harris D.E."/>
            <person name="Gordon S.V."/>
            <person name="Eiglmeier K."/>
            <person name="Gas S."/>
            <person name="Barry C.E. III"/>
            <person name="Tekaia F."/>
            <person name="Badcock K."/>
            <person name="Basham D."/>
            <person name="Brown D."/>
            <person name="Chillingworth T."/>
            <person name="Connor R."/>
            <person name="Davies R.M."/>
            <person name="Devlin K."/>
            <person name="Feltwell T."/>
            <person name="Gentles S."/>
            <person name="Hamlin N."/>
            <person name="Holroyd S."/>
            <person name="Hornsby T."/>
            <person name="Jagels K."/>
            <person name="Krogh A."/>
            <person name="McLean J."/>
            <person name="Moule S."/>
            <person name="Murphy L.D."/>
            <person name="Oliver S."/>
            <person name="Osborne J."/>
            <person name="Quail M.A."/>
            <person name="Rajandream M.A."/>
            <person name="Rogers J."/>
            <person name="Rutter S."/>
            <person name="Seeger K."/>
            <person name="Skelton S."/>
            <person name="Squares S."/>
            <person name="Squares R."/>
            <person name="Sulston J.E."/>
            <person name="Taylor K."/>
            <person name="Whitehead S."/>
            <person name="Barrell B.G."/>
        </authorList>
    </citation>
    <scope>NUCLEOTIDE SEQUENCE [LARGE SCALE GENOMIC DNA]</scope>
    <source>
        <strain>ATCC 25618 / H37Rv</strain>
    </source>
</reference>
<reference key="2">
    <citation type="journal article" date="2000" name="Proc. Natl. Acad. Sci. U.S.A.">
        <title>The salicylate-derived mycobactin siderophores of Mycobacterium tuberculosis are essential for growth in macrophages.</title>
        <authorList>
            <person name="De Voss J.J."/>
            <person name="Rutter K."/>
            <person name="Schroeder B.G."/>
            <person name="Su H."/>
            <person name="Zhu Y."/>
            <person name="Barry C.E. III"/>
        </authorList>
    </citation>
    <scope>ROLE IN MYCOBACTIN BIOSYNTHESIS</scope>
    <source>
        <strain>ATCC 25618 / H37Rv</strain>
    </source>
</reference>
<reference key="3">
    <citation type="journal article" date="2001" name="Mol. Microbiol.">
        <title>The Mycobacterium tuberculosis IdeR is a dual functional regulator that controls transcription of genes involved in iron acquisition, iron storage and survival in macrophages.</title>
        <authorList>
            <person name="Gold B."/>
            <person name="Rodriguez G.M."/>
            <person name="Marras S.A.E."/>
            <person name="Pentecost M."/>
            <person name="Smith I."/>
        </authorList>
    </citation>
    <scope>INDUCTION</scope>
    <source>
        <strain>ATCC 25618 / H37Rv</strain>
    </source>
</reference>
<reference key="4">
    <citation type="journal article" date="2011" name="Mol. Cell. Proteomics">
        <title>Proteogenomic analysis of Mycobacterium tuberculosis by high resolution mass spectrometry.</title>
        <authorList>
            <person name="Kelkar D.S."/>
            <person name="Kumar D."/>
            <person name="Kumar P."/>
            <person name="Balakrishnan L."/>
            <person name="Muthusamy B."/>
            <person name="Yadav A.K."/>
            <person name="Shrivastava P."/>
            <person name="Marimuthu A."/>
            <person name="Anand S."/>
            <person name="Sundaram H."/>
            <person name="Kingsbury R."/>
            <person name="Harsha H.C."/>
            <person name="Nair B."/>
            <person name="Prasad T.S."/>
            <person name="Chauhan D.S."/>
            <person name="Katoch K."/>
            <person name="Katoch V.M."/>
            <person name="Kumar P."/>
            <person name="Chaerkady R."/>
            <person name="Ramachandran S."/>
            <person name="Dash D."/>
            <person name="Pandey A."/>
        </authorList>
    </citation>
    <scope>IDENTIFICATION BY MASS SPECTROMETRY [LARGE SCALE ANALYSIS]</scope>
    <source>
        <strain>ATCC 25618 / H37Rv</strain>
    </source>
</reference>
<reference key="5">
    <citation type="journal article" date="2014" name="J. Bacteriol.">
        <title>Iron-regulated protein HupB of Mycobacterium tuberculosis positively regulates siderophore biosynthesis and is essential for growth in macrophages.</title>
        <authorList>
            <person name="Pandey S.D."/>
            <person name="Choudhury M."/>
            <person name="Yousuf S."/>
            <person name="Wheeler P.R."/>
            <person name="Gordon S.V."/>
            <person name="Ranjan A."/>
            <person name="Sritharan M."/>
        </authorList>
    </citation>
    <scope>INDUCTION</scope>
    <source>
        <strain>ATCC 25618 / H37Rv</strain>
    </source>
</reference>
<organism>
    <name type="scientific">Mycobacterium tuberculosis (strain ATCC 25618 / H37Rv)</name>
    <dbReference type="NCBI Taxonomy" id="83332"/>
    <lineage>
        <taxon>Bacteria</taxon>
        <taxon>Bacillati</taxon>
        <taxon>Actinomycetota</taxon>
        <taxon>Actinomycetes</taxon>
        <taxon>Mycobacteriales</taxon>
        <taxon>Mycobacteriaceae</taxon>
        <taxon>Mycobacterium</taxon>
        <taxon>Mycobacterium tuberculosis complex</taxon>
    </lineage>
</organism>
<comment type="function">
    <text evidence="3">Involved in the initial steps of the mycobactin biosynthetic pathway. Putatively couples activated salicylic acid with serine or threonine and cyclizes this precursor to the hydroxyphenyloxazoline ring system present in this class of siderophores. Essential for growth in macrophages.</text>
</comment>
<comment type="cofactor">
    <cofactor evidence="1">
        <name>pantetheine 4'-phosphate</name>
        <dbReference type="ChEBI" id="CHEBI:47942"/>
    </cofactor>
    <text evidence="1">Binds 2 phosphopantetheines covalently.</text>
</comment>
<comment type="pathway">
    <text>Siderophore biosynthesis; mycobactin biosynthesis.</text>
</comment>
<comment type="induction">
    <text evidence="4 5 7">The first gene in the probable mtbB-mtbC-mtbD-mtbE-mtbF-mtbG-mtbH operon (Probable). Induced by iron starvation conditions and during infection of human THP-1 macrophages. Transcriptionally repressed by IdeR and iron (PubMed:11722747). Induced 27-fold by iron starvation (0.02 ug Fe/ml versus 8 ug Fe/ml). Probably transcriptionally activated by HupB; deletion of hupB decreases induction 10-fold (PubMed:24610707).</text>
</comment>
<comment type="domain">
    <text evidence="1">Modular protein that contains an aryl carrier protein (ArCP) domain which bears a phosphopantetheinyl arm to attach the activated salicylic acid, a condensation/cyclization domain involved in the formation of the oxazoline ring, an adenylation domain which activates the serine or threonine residue into an aminoacyl-AMP ester, a peptidyl carrier protein (PCP) domain which bears a phosphopantetheinyl arm to attach the activated serine or threonine, and a terminal thioesterase domain which assists in the transfer of intermediates from MbtB to ACP1 in MbtD.</text>
</comment>
<comment type="PTM">
    <text evidence="1">4'-phosphopantetheine is transferred from CoA to a specific serine in each of the two carrier protein domains, leading to their activation from apo to holo forms.</text>
</comment>
<comment type="similarity">
    <text evidence="6">Belongs to the ATP-dependent AMP-binding enzyme family. MbtB subfamily.</text>
</comment>
<gene>
    <name type="primary">mbtB</name>
    <name type="ordered locus">Rv2383c</name>
</gene>
<accession>P9WQ63</accession>
<accession>L0TCD0</accession>
<accession>P71717</accession>
<accession>Q7D788</accession>
<name>MBTB_MYCTU</name>
<evidence type="ECO:0000250" key="1"/>
<evidence type="ECO:0000255" key="2">
    <source>
        <dbReference type="PROSITE-ProRule" id="PRU00258"/>
    </source>
</evidence>
<evidence type="ECO:0000269" key="3">
    <source>
    </source>
</evidence>
<evidence type="ECO:0000269" key="4">
    <source>
    </source>
</evidence>
<evidence type="ECO:0000269" key="5">
    <source>
    </source>
</evidence>
<evidence type="ECO:0000305" key="6"/>
<evidence type="ECO:0000305" key="7">
    <source>
    </source>
</evidence>